<keyword id="KW-0067">ATP-binding</keyword>
<keyword id="KW-0418">Kinase</keyword>
<keyword id="KW-0545">Nucleotide biosynthesis</keyword>
<keyword id="KW-0547">Nucleotide-binding</keyword>
<keyword id="KW-0808">Transferase</keyword>
<organism>
    <name type="scientific">Cupriavidus pinatubonensis (strain JMP 134 / LMG 1197)</name>
    <name type="common">Cupriavidus necator (strain JMP 134)</name>
    <dbReference type="NCBI Taxonomy" id="264198"/>
    <lineage>
        <taxon>Bacteria</taxon>
        <taxon>Pseudomonadati</taxon>
        <taxon>Pseudomonadota</taxon>
        <taxon>Betaproteobacteria</taxon>
        <taxon>Burkholderiales</taxon>
        <taxon>Burkholderiaceae</taxon>
        <taxon>Cupriavidus</taxon>
    </lineage>
</organism>
<sequence length="203" mass="22744">MRGKFITFEGIDGAGKSTHIGAVAARLRERKDIPAVVTTREPGGTPLGEDLRQILLHRKMHLETEALLMFAARREHIAEVIEPALARGDWVISDRFTDATFAYQGGGRGLATSRLETLETWVQDGLQPDLTLLFDVPLETASERLAGAREPDKFEAESRAFFERTRAEYLRRAAQAPERFRVIDATQSIEAIRVELEKIISTL</sequence>
<name>KTHY_CUPPJ</name>
<dbReference type="EC" id="2.7.4.9" evidence="1"/>
<dbReference type="EMBL" id="CP000090">
    <property type="protein sequence ID" value="AAZ60804.1"/>
    <property type="molecule type" value="Genomic_DNA"/>
</dbReference>
<dbReference type="SMR" id="Q471X9"/>
<dbReference type="STRING" id="264198.Reut_A1434"/>
<dbReference type="KEGG" id="reu:Reut_A1434"/>
<dbReference type="eggNOG" id="COG0125">
    <property type="taxonomic scope" value="Bacteria"/>
</dbReference>
<dbReference type="HOGENOM" id="CLU_049131_0_2_4"/>
<dbReference type="OrthoDB" id="9774907at2"/>
<dbReference type="GO" id="GO:0005829">
    <property type="term" value="C:cytosol"/>
    <property type="evidence" value="ECO:0007669"/>
    <property type="project" value="TreeGrafter"/>
</dbReference>
<dbReference type="GO" id="GO:0005524">
    <property type="term" value="F:ATP binding"/>
    <property type="evidence" value="ECO:0007669"/>
    <property type="project" value="UniProtKB-UniRule"/>
</dbReference>
<dbReference type="GO" id="GO:0004798">
    <property type="term" value="F:dTMP kinase activity"/>
    <property type="evidence" value="ECO:0007669"/>
    <property type="project" value="UniProtKB-UniRule"/>
</dbReference>
<dbReference type="GO" id="GO:0006233">
    <property type="term" value="P:dTDP biosynthetic process"/>
    <property type="evidence" value="ECO:0007669"/>
    <property type="project" value="InterPro"/>
</dbReference>
<dbReference type="GO" id="GO:0006235">
    <property type="term" value="P:dTTP biosynthetic process"/>
    <property type="evidence" value="ECO:0007669"/>
    <property type="project" value="UniProtKB-UniRule"/>
</dbReference>
<dbReference type="GO" id="GO:0006227">
    <property type="term" value="P:dUDP biosynthetic process"/>
    <property type="evidence" value="ECO:0007669"/>
    <property type="project" value="TreeGrafter"/>
</dbReference>
<dbReference type="CDD" id="cd01672">
    <property type="entry name" value="TMPK"/>
    <property type="match status" value="1"/>
</dbReference>
<dbReference type="FunFam" id="3.40.50.300:FF:000225">
    <property type="entry name" value="Thymidylate kinase"/>
    <property type="match status" value="1"/>
</dbReference>
<dbReference type="Gene3D" id="3.40.50.300">
    <property type="entry name" value="P-loop containing nucleotide triphosphate hydrolases"/>
    <property type="match status" value="1"/>
</dbReference>
<dbReference type="HAMAP" id="MF_00165">
    <property type="entry name" value="Thymidylate_kinase"/>
    <property type="match status" value="1"/>
</dbReference>
<dbReference type="InterPro" id="IPR027417">
    <property type="entry name" value="P-loop_NTPase"/>
</dbReference>
<dbReference type="InterPro" id="IPR039430">
    <property type="entry name" value="Thymidylate_kin-like_dom"/>
</dbReference>
<dbReference type="InterPro" id="IPR018094">
    <property type="entry name" value="Thymidylate_kinase"/>
</dbReference>
<dbReference type="NCBIfam" id="TIGR00041">
    <property type="entry name" value="DTMP_kinase"/>
    <property type="match status" value="1"/>
</dbReference>
<dbReference type="PANTHER" id="PTHR10344">
    <property type="entry name" value="THYMIDYLATE KINASE"/>
    <property type="match status" value="1"/>
</dbReference>
<dbReference type="PANTHER" id="PTHR10344:SF4">
    <property type="entry name" value="UMP-CMP KINASE 2, MITOCHONDRIAL"/>
    <property type="match status" value="1"/>
</dbReference>
<dbReference type="Pfam" id="PF02223">
    <property type="entry name" value="Thymidylate_kin"/>
    <property type="match status" value="1"/>
</dbReference>
<dbReference type="SUPFAM" id="SSF52540">
    <property type="entry name" value="P-loop containing nucleoside triphosphate hydrolases"/>
    <property type="match status" value="1"/>
</dbReference>
<evidence type="ECO:0000255" key="1">
    <source>
        <dbReference type="HAMAP-Rule" id="MF_00165"/>
    </source>
</evidence>
<feature type="chain" id="PRO_1000123584" description="Thymidylate kinase">
    <location>
        <begin position="1"/>
        <end position="203"/>
    </location>
</feature>
<feature type="binding site" evidence="1">
    <location>
        <begin position="10"/>
        <end position="17"/>
    </location>
    <ligand>
        <name>ATP</name>
        <dbReference type="ChEBI" id="CHEBI:30616"/>
    </ligand>
</feature>
<gene>
    <name evidence="1" type="primary">tmk</name>
    <name type="ordered locus">Reut_A1434</name>
</gene>
<accession>Q471X9</accession>
<comment type="function">
    <text evidence="1">Phosphorylation of dTMP to form dTDP in both de novo and salvage pathways of dTTP synthesis.</text>
</comment>
<comment type="catalytic activity">
    <reaction evidence="1">
        <text>dTMP + ATP = dTDP + ADP</text>
        <dbReference type="Rhea" id="RHEA:13517"/>
        <dbReference type="ChEBI" id="CHEBI:30616"/>
        <dbReference type="ChEBI" id="CHEBI:58369"/>
        <dbReference type="ChEBI" id="CHEBI:63528"/>
        <dbReference type="ChEBI" id="CHEBI:456216"/>
        <dbReference type="EC" id="2.7.4.9"/>
    </reaction>
</comment>
<comment type="similarity">
    <text evidence="1">Belongs to the thymidylate kinase family.</text>
</comment>
<proteinExistence type="inferred from homology"/>
<reference key="1">
    <citation type="journal article" date="2010" name="PLoS ONE">
        <title>The complete multipartite genome sequence of Cupriavidus necator JMP134, a versatile pollutant degrader.</title>
        <authorList>
            <person name="Lykidis A."/>
            <person name="Perez-Pantoja D."/>
            <person name="Ledger T."/>
            <person name="Mavromatis K."/>
            <person name="Anderson I.J."/>
            <person name="Ivanova N.N."/>
            <person name="Hooper S.D."/>
            <person name="Lapidus A."/>
            <person name="Lucas S."/>
            <person name="Gonzalez B."/>
            <person name="Kyrpides N.C."/>
        </authorList>
    </citation>
    <scope>NUCLEOTIDE SEQUENCE [LARGE SCALE GENOMIC DNA]</scope>
    <source>
        <strain>JMP134 / LMG 1197</strain>
    </source>
</reference>
<protein>
    <recommendedName>
        <fullName evidence="1">Thymidylate kinase</fullName>
        <ecNumber evidence="1">2.7.4.9</ecNumber>
    </recommendedName>
    <alternativeName>
        <fullName evidence="1">dTMP kinase</fullName>
    </alternativeName>
</protein>